<proteinExistence type="inferred from homology"/>
<organism>
    <name type="scientific">Staphylococcus aureus (strain Mu50 / ATCC 700699)</name>
    <dbReference type="NCBI Taxonomy" id="158878"/>
    <lineage>
        <taxon>Bacteria</taxon>
        <taxon>Bacillati</taxon>
        <taxon>Bacillota</taxon>
        <taxon>Bacilli</taxon>
        <taxon>Bacillales</taxon>
        <taxon>Staphylococcaceae</taxon>
        <taxon>Staphylococcus</taxon>
    </lineage>
</organism>
<accession>Q99WJ1</accession>
<gene>
    <name evidence="1" type="primary">xpt</name>
    <name type="ordered locus">SAV0388</name>
</gene>
<dbReference type="EC" id="2.4.2.22" evidence="1"/>
<dbReference type="EMBL" id="BA000017">
    <property type="protein sequence ID" value="BAB56550.1"/>
    <property type="molecule type" value="Genomic_DNA"/>
</dbReference>
<dbReference type="RefSeq" id="WP_000421410.1">
    <property type="nucleotide sequence ID" value="NC_002758.2"/>
</dbReference>
<dbReference type="SMR" id="Q99WJ1"/>
<dbReference type="GeneID" id="66838694"/>
<dbReference type="KEGG" id="sav:SAV0388"/>
<dbReference type="HOGENOM" id="CLU_099015_0_0_9"/>
<dbReference type="PhylomeDB" id="Q99WJ1"/>
<dbReference type="UniPathway" id="UPA00602">
    <property type="reaction ID" value="UER00658"/>
</dbReference>
<dbReference type="Proteomes" id="UP000002481">
    <property type="component" value="Chromosome"/>
</dbReference>
<dbReference type="GO" id="GO:0005737">
    <property type="term" value="C:cytoplasm"/>
    <property type="evidence" value="ECO:0007669"/>
    <property type="project" value="UniProtKB-SubCell"/>
</dbReference>
<dbReference type="GO" id="GO:0000310">
    <property type="term" value="F:xanthine phosphoribosyltransferase activity"/>
    <property type="evidence" value="ECO:0007669"/>
    <property type="project" value="UniProtKB-UniRule"/>
</dbReference>
<dbReference type="GO" id="GO:0006166">
    <property type="term" value="P:purine ribonucleoside salvage"/>
    <property type="evidence" value="ECO:0007669"/>
    <property type="project" value="UniProtKB-KW"/>
</dbReference>
<dbReference type="GO" id="GO:0046110">
    <property type="term" value="P:xanthine metabolic process"/>
    <property type="evidence" value="ECO:0007669"/>
    <property type="project" value="InterPro"/>
</dbReference>
<dbReference type="GO" id="GO:0032265">
    <property type="term" value="P:XMP salvage"/>
    <property type="evidence" value="ECO:0007669"/>
    <property type="project" value="UniProtKB-UniRule"/>
</dbReference>
<dbReference type="CDD" id="cd06223">
    <property type="entry name" value="PRTases_typeI"/>
    <property type="match status" value="1"/>
</dbReference>
<dbReference type="Gene3D" id="3.40.50.2020">
    <property type="match status" value="1"/>
</dbReference>
<dbReference type="HAMAP" id="MF_01184">
    <property type="entry name" value="XPRTase"/>
    <property type="match status" value="1"/>
</dbReference>
<dbReference type="InterPro" id="IPR000836">
    <property type="entry name" value="PRibTrfase_dom"/>
</dbReference>
<dbReference type="InterPro" id="IPR029057">
    <property type="entry name" value="PRTase-like"/>
</dbReference>
<dbReference type="InterPro" id="IPR050118">
    <property type="entry name" value="Pur/Pyrimidine_PRTase"/>
</dbReference>
<dbReference type="InterPro" id="IPR010079">
    <property type="entry name" value="Xanthine_PRibTrfase"/>
</dbReference>
<dbReference type="NCBIfam" id="NF006671">
    <property type="entry name" value="PRK09219.1"/>
    <property type="match status" value="1"/>
</dbReference>
<dbReference type="NCBIfam" id="TIGR01744">
    <property type="entry name" value="XPRTase"/>
    <property type="match status" value="1"/>
</dbReference>
<dbReference type="PANTHER" id="PTHR43864">
    <property type="entry name" value="HYPOXANTHINE/GUANINE PHOSPHORIBOSYLTRANSFERASE"/>
    <property type="match status" value="1"/>
</dbReference>
<dbReference type="PANTHER" id="PTHR43864:SF1">
    <property type="entry name" value="XANTHINE PHOSPHORIBOSYLTRANSFERASE"/>
    <property type="match status" value="1"/>
</dbReference>
<dbReference type="SUPFAM" id="SSF53271">
    <property type="entry name" value="PRTase-like"/>
    <property type="match status" value="1"/>
</dbReference>
<keyword id="KW-0963">Cytoplasm</keyword>
<keyword id="KW-0328">Glycosyltransferase</keyword>
<keyword id="KW-0660">Purine salvage</keyword>
<keyword id="KW-0808">Transferase</keyword>
<name>XPT_STAAM</name>
<reference key="1">
    <citation type="journal article" date="2001" name="Lancet">
        <title>Whole genome sequencing of meticillin-resistant Staphylococcus aureus.</title>
        <authorList>
            <person name="Kuroda M."/>
            <person name="Ohta T."/>
            <person name="Uchiyama I."/>
            <person name="Baba T."/>
            <person name="Yuzawa H."/>
            <person name="Kobayashi I."/>
            <person name="Cui L."/>
            <person name="Oguchi A."/>
            <person name="Aoki K."/>
            <person name="Nagai Y."/>
            <person name="Lian J.-Q."/>
            <person name="Ito T."/>
            <person name="Kanamori M."/>
            <person name="Matsumaru H."/>
            <person name="Maruyama A."/>
            <person name="Murakami H."/>
            <person name="Hosoyama A."/>
            <person name="Mizutani-Ui Y."/>
            <person name="Takahashi N.K."/>
            <person name="Sawano T."/>
            <person name="Inoue R."/>
            <person name="Kaito C."/>
            <person name="Sekimizu K."/>
            <person name="Hirakawa H."/>
            <person name="Kuhara S."/>
            <person name="Goto S."/>
            <person name="Yabuzaki J."/>
            <person name="Kanehisa M."/>
            <person name="Yamashita A."/>
            <person name="Oshima K."/>
            <person name="Furuya K."/>
            <person name="Yoshino C."/>
            <person name="Shiba T."/>
            <person name="Hattori M."/>
            <person name="Ogasawara N."/>
            <person name="Hayashi H."/>
            <person name="Hiramatsu K."/>
        </authorList>
    </citation>
    <scope>NUCLEOTIDE SEQUENCE [LARGE SCALE GENOMIC DNA]</scope>
    <source>
        <strain>Mu50 / ATCC 700699</strain>
    </source>
</reference>
<evidence type="ECO:0000255" key="1">
    <source>
        <dbReference type="HAMAP-Rule" id="MF_01184"/>
    </source>
</evidence>
<protein>
    <recommendedName>
        <fullName evidence="1">Xanthine phosphoribosyltransferase</fullName>
        <shortName evidence="1">XPRTase</shortName>
        <ecNumber evidence="1">2.4.2.22</ecNumber>
    </recommendedName>
</protein>
<comment type="function">
    <text evidence="1">Converts the preformed base xanthine, a product of nucleic acid breakdown, to xanthosine 5'-monophosphate (XMP), so it can be reused for RNA or DNA synthesis.</text>
</comment>
<comment type="catalytic activity">
    <reaction evidence="1">
        <text>XMP + diphosphate = xanthine + 5-phospho-alpha-D-ribose 1-diphosphate</text>
        <dbReference type="Rhea" id="RHEA:10800"/>
        <dbReference type="ChEBI" id="CHEBI:17712"/>
        <dbReference type="ChEBI" id="CHEBI:33019"/>
        <dbReference type="ChEBI" id="CHEBI:57464"/>
        <dbReference type="ChEBI" id="CHEBI:58017"/>
        <dbReference type="EC" id="2.4.2.22"/>
    </reaction>
</comment>
<comment type="pathway">
    <text evidence="1">Purine metabolism; XMP biosynthesis via salvage pathway; XMP from xanthine: step 1/1.</text>
</comment>
<comment type="subunit">
    <text evidence="1">Homodimer.</text>
</comment>
<comment type="subcellular location">
    <subcellularLocation>
        <location evidence="1">Cytoplasm</location>
    </subcellularLocation>
</comment>
<comment type="similarity">
    <text evidence="1">Belongs to the purine/pyrimidine phosphoribosyltransferase family. Xpt subfamily.</text>
</comment>
<feature type="chain" id="PRO_0000339748" description="Xanthine phosphoribosyltransferase">
    <location>
        <begin position="1"/>
        <end position="192"/>
    </location>
</feature>
<feature type="binding site" evidence="1">
    <location>
        <position position="20"/>
    </location>
    <ligand>
        <name>xanthine</name>
        <dbReference type="ChEBI" id="CHEBI:17712"/>
    </ligand>
</feature>
<feature type="binding site" evidence="1">
    <location>
        <position position="27"/>
    </location>
    <ligand>
        <name>xanthine</name>
        <dbReference type="ChEBI" id="CHEBI:17712"/>
    </ligand>
</feature>
<feature type="binding site" evidence="1">
    <location>
        <begin position="128"/>
        <end position="132"/>
    </location>
    <ligand>
        <name>5-phospho-alpha-D-ribose 1-diphosphate</name>
        <dbReference type="ChEBI" id="CHEBI:58017"/>
    </ligand>
</feature>
<feature type="binding site" evidence="1">
    <location>
        <position position="156"/>
    </location>
    <ligand>
        <name>xanthine</name>
        <dbReference type="ChEBI" id="CHEBI:17712"/>
    </ligand>
</feature>
<sequence length="192" mass="20884">MELLGQKVKEDGVVIDEKILKVDGFLNHQIDAKLMNEVGRTFYEQFKDKGITKILTIEASGIAPAIMAALHFDVPCLFAKKAKPSTLTDGYYETSIHSFTKNKTSTVIVSKEFLSEEDTVLIIDDFLANGDASLGLYDIAQQANAKTAGIGIVVEKSFQNGHQRLEEAGLTVSSLCKVASLEGNKVTLVGEE</sequence>